<gene>
    <name evidence="1" type="primary">rnz</name>
    <name type="ordered locus">Ta1155</name>
</gene>
<name>RNZ_THEAC</name>
<dbReference type="EC" id="3.1.26.11" evidence="1"/>
<dbReference type="EMBL" id="AL445066">
    <property type="protein sequence ID" value="CAC12280.1"/>
    <property type="status" value="ALT_INIT"/>
    <property type="molecule type" value="Genomic_DNA"/>
</dbReference>
<dbReference type="RefSeq" id="WP_048161986.1">
    <property type="nucleotide sequence ID" value="NC_002578.1"/>
</dbReference>
<dbReference type="SMR" id="Q9HJ19"/>
<dbReference type="FunCoup" id="Q9HJ19">
    <property type="interactions" value="105"/>
</dbReference>
<dbReference type="STRING" id="273075.gene:9572376"/>
<dbReference type="PaxDb" id="273075-Ta1155"/>
<dbReference type="EnsemblBacteria" id="CAC12280">
    <property type="protein sequence ID" value="CAC12280"/>
    <property type="gene ID" value="CAC12280"/>
</dbReference>
<dbReference type="KEGG" id="tac:Ta1155"/>
<dbReference type="eggNOG" id="arCOG00501">
    <property type="taxonomic scope" value="Archaea"/>
</dbReference>
<dbReference type="HOGENOM" id="CLU_031317_2_1_2"/>
<dbReference type="InParanoid" id="Q9HJ19"/>
<dbReference type="OrthoDB" id="85118at2157"/>
<dbReference type="BRENDA" id="3.1.26.11">
    <property type="organism ID" value="6324"/>
</dbReference>
<dbReference type="Proteomes" id="UP000001024">
    <property type="component" value="Chromosome"/>
</dbReference>
<dbReference type="GO" id="GO:0042781">
    <property type="term" value="F:3'-tRNA processing endoribonuclease activity"/>
    <property type="evidence" value="ECO:0007669"/>
    <property type="project" value="UniProtKB-UniRule"/>
</dbReference>
<dbReference type="GO" id="GO:0008270">
    <property type="term" value="F:zinc ion binding"/>
    <property type="evidence" value="ECO:0007669"/>
    <property type="project" value="UniProtKB-UniRule"/>
</dbReference>
<dbReference type="CDD" id="cd07717">
    <property type="entry name" value="RNaseZ_ZiPD-like_MBL-fold"/>
    <property type="match status" value="1"/>
</dbReference>
<dbReference type="Gene3D" id="3.60.15.10">
    <property type="entry name" value="Ribonuclease Z/Hydroxyacylglutathione hydrolase-like"/>
    <property type="match status" value="1"/>
</dbReference>
<dbReference type="HAMAP" id="MF_01818">
    <property type="entry name" value="RNase_Z_BN"/>
    <property type="match status" value="1"/>
</dbReference>
<dbReference type="InterPro" id="IPR001279">
    <property type="entry name" value="Metallo-B-lactamas"/>
</dbReference>
<dbReference type="InterPro" id="IPR036866">
    <property type="entry name" value="RibonucZ/Hydroxyglut_hydro"/>
</dbReference>
<dbReference type="InterPro" id="IPR013471">
    <property type="entry name" value="RNase_Z/BN"/>
</dbReference>
<dbReference type="NCBIfam" id="NF000801">
    <property type="entry name" value="PRK00055.1-3"/>
    <property type="match status" value="1"/>
</dbReference>
<dbReference type="NCBIfam" id="TIGR02651">
    <property type="entry name" value="RNase_Z"/>
    <property type="match status" value="1"/>
</dbReference>
<dbReference type="PANTHER" id="PTHR46018">
    <property type="entry name" value="ZINC PHOSPHODIESTERASE ELAC PROTEIN 1"/>
    <property type="match status" value="1"/>
</dbReference>
<dbReference type="PANTHER" id="PTHR46018:SF2">
    <property type="entry name" value="ZINC PHOSPHODIESTERASE ELAC PROTEIN 1"/>
    <property type="match status" value="1"/>
</dbReference>
<dbReference type="Pfam" id="PF12706">
    <property type="entry name" value="Lactamase_B_2"/>
    <property type="match status" value="2"/>
</dbReference>
<dbReference type="SUPFAM" id="SSF56281">
    <property type="entry name" value="Metallo-hydrolase/oxidoreductase"/>
    <property type="match status" value="1"/>
</dbReference>
<protein>
    <recommendedName>
        <fullName evidence="1">Ribonuclease Z</fullName>
        <shortName evidence="1">RNase Z</shortName>
        <ecNumber evidence="1">3.1.26.11</ecNumber>
    </recommendedName>
    <alternativeName>
        <fullName evidence="1">tRNA 3 endonuclease</fullName>
    </alternativeName>
    <alternativeName>
        <fullName evidence="1">tRNase Z</fullName>
    </alternativeName>
</protein>
<feature type="chain" id="PRO_0000155939" description="Ribonuclease Z">
    <location>
        <begin position="1"/>
        <end position="307"/>
    </location>
</feature>
<feature type="active site" description="Proton acceptor" evidence="1">
    <location>
        <position position="68"/>
    </location>
</feature>
<feature type="binding site" evidence="1">
    <location>
        <position position="64"/>
    </location>
    <ligand>
        <name>Zn(2+)</name>
        <dbReference type="ChEBI" id="CHEBI:29105"/>
        <label>1</label>
        <note>catalytic</note>
    </ligand>
</feature>
<feature type="binding site" evidence="1">
    <location>
        <position position="66"/>
    </location>
    <ligand>
        <name>Zn(2+)</name>
        <dbReference type="ChEBI" id="CHEBI:29105"/>
        <label>1</label>
        <note>catalytic</note>
    </ligand>
</feature>
<feature type="binding site" evidence="1">
    <location>
        <position position="68"/>
    </location>
    <ligand>
        <name>Zn(2+)</name>
        <dbReference type="ChEBI" id="CHEBI:29105"/>
        <label>2</label>
        <note>catalytic</note>
    </ligand>
</feature>
<feature type="binding site" evidence="1">
    <location>
        <position position="69"/>
    </location>
    <ligand>
        <name>Zn(2+)</name>
        <dbReference type="ChEBI" id="CHEBI:29105"/>
        <label>2</label>
        <note>catalytic</note>
    </ligand>
</feature>
<feature type="binding site" evidence="1">
    <location>
        <position position="141"/>
    </location>
    <ligand>
        <name>Zn(2+)</name>
        <dbReference type="ChEBI" id="CHEBI:29105"/>
        <label>1</label>
        <note>catalytic</note>
    </ligand>
</feature>
<feature type="binding site" evidence="1">
    <location>
        <position position="209"/>
    </location>
    <ligand>
        <name>Zn(2+)</name>
        <dbReference type="ChEBI" id="CHEBI:29105"/>
        <label>1</label>
        <note>catalytic</note>
    </ligand>
</feature>
<feature type="binding site" evidence="1">
    <location>
        <position position="209"/>
    </location>
    <ligand>
        <name>Zn(2+)</name>
        <dbReference type="ChEBI" id="CHEBI:29105"/>
        <label>2</label>
        <note>catalytic</note>
    </ligand>
</feature>
<feature type="binding site" evidence="1">
    <location>
        <position position="267"/>
    </location>
    <ligand>
        <name>Zn(2+)</name>
        <dbReference type="ChEBI" id="CHEBI:29105"/>
        <label>2</label>
        <note>catalytic</note>
    </ligand>
</feature>
<evidence type="ECO:0000255" key="1">
    <source>
        <dbReference type="HAMAP-Rule" id="MF_01818"/>
    </source>
</evidence>
<evidence type="ECO:0000305" key="2"/>
<accession>Q9HJ19</accession>
<organism>
    <name type="scientific">Thermoplasma acidophilum (strain ATCC 25905 / DSM 1728 / JCM 9062 / NBRC 15155 / AMRC-C165)</name>
    <dbReference type="NCBI Taxonomy" id="273075"/>
    <lineage>
        <taxon>Archaea</taxon>
        <taxon>Methanobacteriati</taxon>
        <taxon>Thermoplasmatota</taxon>
        <taxon>Thermoplasmata</taxon>
        <taxon>Thermoplasmatales</taxon>
        <taxon>Thermoplasmataceae</taxon>
        <taxon>Thermoplasma</taxon>
    </lineage>
</organism>
<comment type="function">
    <text evidence="1">Zinc phosphodiesterase, which displays some tRNA 3'-processing endonuclease activity. Probably involved in tRNA maturation, by removing a 3'-trailer from precursor tRNA.</text>
</comment>
<comment type="catalytic activity">
    <reaction evidence="1">
        <text>Endonucleolytic cleavage of RNA, removing extra 3' nucleotides from tRNA precursor, generating 3' termini of tRNAs. A 3'-hydroxy group is left at the tRNA terminus and a 5'-phosphoryl group is left at the trailer molecule.</text>
        <dbReference type="EC" id="3.1.26.11"/>
    </reaction>
</comment>
<comment type="cofactor">
    <cofactor evidence="1">
        <name>Zn(2+)</name>
        <dbReference type="ChEBI" id="CHEBI:29105"/>
    </cofactor>
    <text evidence="1">Binds 2 Zn(2+) ions.</text>
</comment>
<comment type="subunit">
    <text evidence="1">Homodimer.</text>
</comment>
<comment type="similarity">
    <text evidence="1">Belongs to the RNase Z family.</text>
</comment>
<comment type="sequence caution" evidence="2">
    <conflict type="erroneous initiation">
        <sequence resource="EMBL-CDS" id="CAC12280"/>
    </conflict>
    <text>Extended N-terminus.</text>
</comment>
<reference key="1">
    <citation type="journal article" date="2000" name="Nature">
        <title>The genome sequence of the thermoacidophilic scavenger Thermoplasma acidophilum.</title>
        <authorList>
            <person name="Ruepp A."/>
            <person name="Graml W."/>
            <person name="Santos-Martinez M.-L."/>
            <person name="Koretke K.K."/>
            <person name="Volker C."/>
            <person name="Mewes H.-W."/>
            <person name="Frishman D."/>
            <person name="Stocker S."/>
            <person name="Lupas A.N."/>
            <person name="Baumeister W."/>
        </authorList>
    </citation>
    <scope>NUCLEOTIDE SEQUENCE [LARGE SCALE GENOMIC DNA]</scope>
    <source>
        <strain>ATCC 25905 / DSM 1728 / JCM 9062 / NBRC 15155 / AMRC-C165</strain>
    </source>
</reference>
<keyword id="KW-0255">Endonuclease</keyword>
<keyword id="KW-0378">Hydrolase</keyword>
<keyword id="KW-0479">Metal-binding</keyword>
<keyword id="KW-0540">Nuclease</keyword>
<keyword id="KW-1185">Reference proteome</keyword>
<keyword id="KW-0819">tRNA processing</keyword>
<keyword id="KW-0862">Zinc</keyword>
<proteinExistence type="inferred from homology"/>
<sequence>MASNIRIIFYGTGGSWPTPLRAMPGVGVKIDDVLNLFDCGEGTQKQIMKSSTSFMDIDNIFITHFHGDHFLGLLGLVQSMSFNNRTKQLNIFGPHGAIKILSNALNVGYYTLHFPLKIYELEPDRTYDLGKFLIRTMLNDHPVPALSYSIEERDLVRIDPEKAREKNIPSRIIEKIRENGSYVYKGNEYRIDDIAGGVRKGRRIVYTGDTRPMDRMIEFARNADVLIHDTTTDSSFEPMVNEFGHSSSRQAARIARQARVGRLYLYHYSPRITDTSVLLEDARKEFQETYESKDLMEYEVKVRRDVD</sequence>